<evidence type="ECO:0000255" key="1">
    <source>
        <dbReference type="HAMAP-Rule" id="MF_00340"/>
    </source>
</evidence>
<evidence type="ECO:0000256" key="2">
    <source>
        <dbReference type="SAM" id="MobiDB-lite"/>
    </source>
</evidence>
<evidence type="ECO:0000305" key="3"/>
<dbReference type="EMBL" id="CP000555">
    <property type="protein sequence ID" value="ABM93596.1"/>
    <property type="molecule type" value="Genomic_DNA"/>
</dbReference>
<dbReference type="RefSeq" id="WP_011828234.1">
    <property type="nucleotide sequence ID" value="NC_008825.1"/>
</dbReference>
<dbReference type="SMR" id="A2SDF7"/>
<dbReference type="STRING" id="420662.Mpe_A0634"/>
<dbReference type="KEGG" id="mpt:Mpe_A0634"/>
<dbReference type="eggNOG" id="COG0333">
    <property type="taxonomic scope" value="Bacteria"/>
</dbReference>
<dbReference type="HOGENOM" id="CLU_129084_2_1_4"/>
<dbReference type="Proteomes" id="UP000000366">
    <property type="component" value="Chromosome"/>
</dbReference>
<dbReference type="GO" id="GO:0015934">
    <property type="term" value="C:large ribosomal subunit"/>
    <property type="evidence" value="ECO:0007669"/>
    <property type="project" value="InterPro"/>
</dbReference>
<dbReference type="GO" id="GO:0003735">
    <property type="term" value="F:structural constituent of ribosome"/>
    <property type="evidence" value="ECO:0007669"/>
    <property type="project" value="InterPro"/>
</dbReference>
<dbReference type="GO" id="GO:0006412">
    <property type="term" value="P:translation"/>
    <property type="evidence" value="ECO:0007669"/>
    <property type="project" value="UniProtKB-UniRule"/>
</dbReference>
<dbReference type="HAMAP" id="MF_00340">
    <property type="entry name" value="Ribosomal_bL32"/>
    <property type="match status" value="1"/>
</dbReference>
<dbReference type="InterPro" id="IPR002677">
    <property type="entry name" value="Ribosomal_bL32"/>
</dbReference>
<dbReference type="InterPro" id="IPR044957">
    <property type="entry name" value="Ribosomal_bL32_bact"/>
</dbReference>
<dbReference type="InterPro" id="IPR011332">
    <property type="entry name" value="Ribosomal_zn-bd"/>
</dbReference>
<dbReference type="NCBIfam" id="TIGR01031">
    <property type="entry name" value="rpmF_bact"/>
    <property type="match status" value="1"/>
</dbReference>
<dbReference type="PANTHER" id="PTHR35534">
    <property type="entry name" value="50S RIBOSOMAL PROTEIN L32"/>
    <property type="match status" value="1"/>
</dbReference>
<dbReference type="PANTHER" id="PTHR35534:SF1">
    <property type="entry name" value="LARGE RIBOSOMAL SUBUNIT PROTEIN BL32"/>
    <property type="match status" value="1"/>
</dbReference>
<dbReference type="Pfam" id="PF01783">
    <property type="entry name" value="Ribosomal_L32p"/>
    <property type="match status" value="1"/>
</dbReference>
<dbReference type="SUPFAM" id="SSF57829">
    <property type="entry name" value="Zn-binding ribosomal proteins"/>
    <property type="match status" value="1"/>
</dbReference>
<comment type="similarity">
    <text evidence="1">Belongs to the bacterial ribosomal protein bL32 family.</text>
</comment>
<sequence length="60" mass="6634">MAVQQNKKSPSKRGMHRSHNALNTPGLAIEPTTGETHLRHHISATGFYRGRKVLKTKADA</sequence>
<feature type="chain" id="PRO_0000296500" description="Large ribosomal subunit protein bL32">
    <location>
        <begin position="1"/>
        <end position="60"/>
    </location>
</feature>
<feature type="region of interest" description="Disordered" evidence="2">
    <location>
        <begin position="1"/>
        <end position="36"/>
    </location>
</feature>
<feature type="compositionally biased region" description="Basic residues" evidence="2">
    <location>
        <begin position="9"/>
        <end position="19"/>
    </location>
</feature>
<accession>A2SDF7</accession>
<gene>
    <name evidence="1" type="primary">rpmF</name>
    <name type="ordered locus">Mpe_A0634</name>
</gene>
<keyword id="KW-1185">Reference proteome</keyword>
<keyword id="KW-0687">Ribonucleoprotein</keyword>
<keyword id="KW-0689">Ribosomal protein</keyword>
<proteinExistence type="inferred from homology"/>
<protein>
    <recommendedName>
        <fullName evidence="1">Large ribosomal subunit protein bL32</fullName>
    </recommendedName>
    <alternativeName>
        <fullName evidence="3">50S ribosomal protein L32</fullName>
    </alternativeName>
</protein>
<reference key="1">
    <citation type="journal article" date="2007" name="J. Bacteriol.">
        <title>Whole-genome analysis of the methyl tert-butyl ether-degrading beta-proteobacterium Methylibium petroleiphilum PM1.</title>
        <authorList>
            <person name="Kane S.R."/>
            <person name="Chakicherla A.Y."/>
            <person name="Chain P.S.G."/>
            <person name="Schmidt R."/>
            <person name="Shin M.W."/>
            <person name="Legler T.C."/>
            <person name="Scow K.M."/>
            <person name="Larimer F.W."/>
            <person name="Lucas S.M."/>
            <person name="Richardson P.M."/>
            <person name="Hristova K.R."/>
        </authorList>
    </citation>
    <scope>NUCLEOTIDE SEQUENCE [LARGE SCALE GENOMIC DNA]</scope>
    <source>
        <strain>ATCC BAA-1232 / LMG 22953 / PM1</strain>
    </source>
</reference>
<name>RL32_METPP</name>
<organism>
    <name type="scientific">Methylibium petroleiphilum (strain ATCC BAA-1232 / LMG 22953 / PM1)</name>
    <dbReference type="NCBI Taxonomy" id="420662"/>
    <lineage>
        <taxon>Bacteria</taxon>
        <taxon>Pseudomonadati</taxon>
        <taxon>Pseudomonadota</taxon>
        <taxon>Betaproteobacteria</taxon>
        <taxon>Burkholderiales</taxon>
        <taxon>Sphaerotilaceae</taxon>
        <taxon>Methylibium</taxon>
    </lineage>
</organism>